<proteinExistence type="evidence at transcript level"/>
<sequence>MQQPVNYPCPQIYWVDSSATSPWAPPGSVFSCPSSGPRGPGQRRPPPPPPPPSPLPPPSQPPPLPPLSPLKKKDNIELWLPVIFFMVLVALVGMGLGMYQLFHLQKELAELREFTNHSLRVSSFEKQIANPSTPSETKKPRSVAHLTGNPRSRSIPLEWEDTYGTALISGVKYKKGGLVINEAGLYFVYSKVYFRGQSCNSQPLSHKVYMRNFKYPGDLVLMEEKKLNYCTTGQIWAHSSYLGAVFNLTVADHLYVNISQLSLINFEESKTFFGLYKL</sequence>
<feature type="chain" id="PRO_0000034512" description="Tumor necrosis factor ligand superfamily member 6, membrane form">
    <location>
        <begin position="1"/>
        <end position="278"/>
    </location>
</feature>
<feature type="chain" id="PRO_0000417163" description="ADAM10-processed FasL form" evidence="1">
    <location>
        <begin position="1"/>
        <end position="126"/>
    </location>
</feature>
<feature type="chain" id="PRO_0000417164" description="FasL intracellular domain" evidence="1">
    <location>
        <begin position="1"/>
        <end position="79"/>
    </location>
</feature>
<feature type="chain" id="PRO_0000034513" description="Tumor necrosis factor ligand superfamily member 6, soluble form" evidence="1">
    <location>
        <begin position="127"/>
        <end position="278"/>
    </location>
</feature>
<feature type="topological domain" description="Cytoplasmic" evidence="4">
    <location>
        <begin position="1"/>
        <end position="77"/>
    </location>
</feature>
<feature type="transmembrane region" description="Helical; Signal-anchor for type II membrane protein" evidence="4">
    <location>
        <begin position="78"/>
        <end position="99"/>
    </location>
</feature>
<feature type="topological domain" description="Extracellular" evidence="4">
    <location>
        <begin position="100"/>
        <end position="278"/>
    </location>
</feature>
<feature type="domain" description="THD" evidence="5">
    <location>
        <begin position="142"/>
        <end position="278"/>
    </location>
</feature>
<feature type="region of interest" description="Disordered" evidence="6">
    <location>
        <begin position="26"/>
        <end position="68"/>
    </location>
</feature>
<feature type="region of interest" description="Disordered" evidence="6">
    <location>
        <begin position="125"/>
        <end position="147"/>
    </location>
</feature>
<feature type="compositionally biased region" description="Low complexity" evidence="6">
    <location>
        <begin position="33"/>
        <end position="42"/>
    </location>
</feature>
<feature type="compositionally biased region" description="Pro residues" evidence="6">
    <location>
        <begin position="43"/>
        <end position="68"/>
    </location>
</feature>
<feature type="compositionally biased region" description="Polar residues" evidence="6">
    <location>
        <begin position="125"/>
        <end position="135"/>
    </location>
</feature>
<feature type="site" description="Cleavage; by SPPL2A" evidence="1">
    <location>
        <begin position="78"/>
        <end position="79"/>
    </location>
</feature>
<feature type="site" description="Cleavage; by ADAM10" evidence="1">
    <location>
        <begin position="126"/>
        <end position="127"/>
    </location>
</feature>
<feature type="glycosylation site" description="N-linked (GlcNAc...) asparagine" evidence="4">
    <location>
        <position position="116"/>
    </location>
</feature>
<feature type="glycosylation site" description="N-linked (GlcNAc...) asparagine" evidence="4">
    <location>
        <position position="247"/>
    </location>
</feature>
<feature type="glycosylation site" description="N-linked (GlcNAc...) asparagine" evidence="4">
    <location>
        <position position="257"/>
    </location>
</feature>
<feature type="disulfide bond" evidence="5">
    <location>
        <begin position="199"/>
        <end position="230"/>
    </location>
</feature>
<dbReference type="EMBL" id="U03470">
    <property type="protein sequence ID" value="AAC52129.1"/>
    <property type="molecule type" value="mRNA"/>
</dbReference>
<dbReference type="PIR" id="A49266">
    <property type="entry name" value="A49266"/>
</dbReference>
<dbReference type="RefSeq" id="NP_037040.1">
    <property type="nucleotide sequence ID" value="NM_012908.1"/>
</dbReference>
<dbReference type="RefSeq" id="XP_006250210.1">
    <property type="nucleotide sequence ID" value="XM_006250148.3"/>
</dbReference>
<dbReference type="RefSeq" id="XP_008767829.1">
    <property type="nucleotide sequence ID" value="XM_008769607.2"/>
</dbReference>
<dbReference type="RefSeq" id="XP_017454164.1">
    <property type="nucleotide sequence ID" value="XM_017598675.3"/>
</dbReference>
<dbReference type="SMR" id="P36940"/>
<dbReference type="FunCoup" id="P36940">
    <property type="interactions" value="544"/>
</dbReference>
<dbReference type="STRING" id="10116.ENSRNOP00000003998"/>
<dbReference type="GlyCosmos" id="P36940">
    <property type="glycosylation" value="3 sites, No reported glycans"/>
</dbReference>
<dbReference type="GlyGen" id="P36940">
    <property type="glycosylation" value="4 sites"/>
</dbReference>
<dbReference type="PhosphoSitePlus" id="P36940"/>
<dbReference type="PaxDb" id="10116-ENSRNOP00000003998"/>
<dbReference type="Ensembl" id="ENSRNOT00000003998.3">
    <property type="protein sequence ID" value="ENSRNOP00000003998.2"/>
    <property type="gene ID" value="ENSRNOG00000002978.5"/>
</dbReference>
<dbReference type="GeneID" id="25385"/>
<dbReference type="KEGG" id="rno:25385"/>
<dbReference type="UCSC" id="RGD:3880">
    <property type="organism name" value="rat"/>
</dbReference>
<dbReference type="AGR" id="RGD:3880"/>
<dbReference type="CTD" id="356"/>
<dbReference type="RGD" id="3880">
    <property type="gene designation" value="Faslg"/>
</dbReference>
<dbReference type="eggNOG" id="ENOG502RXC1">
    <property type="taxonomic scope" value="Eukaryota"/>
</dbReference>
<dbReference type="GeneTree" id="ENSGT01060000248544"/>
<dbReference type="HOGENOM" id="CLU_070352_2_0_1"/>
<dbReference type="InParanoid" id="P36940"/>
<dbReference type="OMA" id="KVKRSAH"/>
<dbReference type="OrthoDB" id="5983780at2759"/>
<dbReference type="PhylomeDB" id="P36940"/>
<dbReference type="TreeFam" id="TF332169"/>
<dbReference type="Reactome" id="R-RNO-3371378">
    <property type="pathway name" value="Regulation by c-FLIP"/>
</dbReference>
<dbReference type="Reactome" id="R-RNO-5218900">
    <property type="pathway name" value="CASP8 activity is inhibited"/>
</dbReference>
<dbReference type="Reactome" id="R-RNO-69416">
    <property type="pathway name" value="Dimerization of procaspase-8"/>
</dbReference>
<dbReference type="Reactome" id="R-RNO-75157">
    <property type="pathway name" value="FasL/ CD95L signaling"/>
</dbReference>
<dbReference type="PRO" id="PR:P36940"/>
<dbReference type="Proteomes" id="UP000002494">
    <property type="component" value="Chromosome 13"/>
</dbReference>
<dbReference type="Bgee" id="ENSRNOG00000002978">
    <property type="expression patterns" value="Expressed in ileum and 8 other cell types or tissues"/>
</dbReference>
<dbReference type="ExpressionAtlas" id="P36940">
    <property type="expression patterns" value="baseline and differential"/>
</dbReference>
<dbReference type="GO" id="GO:0005901">
    <property type="term" value="C:caveola"/>
    <property type="evidence" value="ECO:0000314"/>
    <property type="project" value="RGD"/>
</dbReference>
<dbReference type="GO" id="GO:0009986">
    <property type="term" value="C:cell surface"/>
    <property type="evidence" value="ECO:0000266"/>
    <property type="project" value="RGD"/>
</dbReference>
<dbReference type="GO" id="GO:0005737">
    <property type="term" value="C:cytoplasm"/>
    <property type="evidence" value="ECO:0000314"/>
    <property type="project" value="RGD"/>
</dbReference>
<dbReference type="GO" id="GO:0060205">
    <property type="term" value="C:cytoplasmic vesicle lumen"/>
    <property type="evidence" value="ECO:0007669"/>
    <property type="project" value="UniProtKB-SubCell"/>
</dbReference>
<dbReference type="GO" id="GO:0009897">
    <property type="term" value="C:external side of plasma membrane"/>
    <property type="evidence" value="ECO:0000266"/>
    <property type="project" value="RGD"/>
</dbReference>
<dbReference type="GO" id="GO:0070062">
    <property type="term" value="C:extracellular exosome"/>
    <property type="evidence" value="ECO:0000266"/>
    <property type="project" value="RGD"/>
</dbReference>
<dbReference type="GO" id="GO:0005615">
    <property type="term" value="C:extracellular space"/>
    <property type="evidence" value="ECO:0000266"/>
    <property type="project" value="RGD"/>
</dbReference>
<dbReference type="GO" id="GO:0043202">
    <property type="term" value="C:lysosomal lumen"/>
    <property type="evidence" value="ECO:0007669"/>
    <property type="project" value="UniProtKB-SubCell"/>
</dbReference>
<dbReference type="GO" id="GO:0005634">
    <property type="term" value="C:nucleus"/>
    <property type="evidence" value="ECO:0000250"/>
    <property type="project" value="UniProtKB"/>
</dbReference>
<dbReference type="GO" id="GO:0048471">
    <property type="term" value="C:perinuclear region of cytoplasm"/>
    <property type="evidence" value="ECO:0000314"/>
    <property type="project" value="RGD"/>
</dbReference>
<dbReference type="GO" id="GO:0005886">
    <property type="term" value="C:plasma membrane"/>
    <property type="evidence" value="ECO:0000314"/>
    <property type="project" value="RGD"/>
</dbReference>
<dbReference type="GO" id="GO:0005125">
    <property type="term" value="F:cytokine activity"/>
    <property type="evidence" value="ECO:0000266"/>
    <property type="project" value="RGD"/>
</dbReference>
<dbReference type="GO" id="GO:0005123">
    <property type="term" value="F:death receptor binding"/>
    <property type="evidence" value="ECO:0000353"/>
    <property type="project" value="RGD"/>
</dbReference>
<dbReference type="GO" id="GO:0005164">
    <property type="term" value="F:tumor necrosis factor receptor binding"/>
    <property type="evidence" value="ECO:0000315"/>
    <property type="project" value="RGD"/>
</dbReference>
<dbReference type="GO" id="GO:0097190">
    <property type="term" value="P:apoptotic signaling pathway"/>
    <property type="evidence" value="ECO:0000266"/>
    <property type="project" value="RGD"/>
</dbReference>
<dbReference type="GO" id="GO:0071346">
    <property type="term" value="P:cellular response to type II interferon"/>
    <property type="evidence" value="ECO:0000270"/>
    <property type="project" value="RGD"/>
</dbReference>
<dbReference type="GO" id="GO:0048388">
    <property type="term" value="P:endosomal lumen acidification"/>
    <property type="evidence" value="ECO:0000314"/>
    <property type="project" value="RGD"/>
</dbReference>
<dbReference type="GO" id="GO:0097191">
    <property type="term" value="P:extrinsic apoptotic signaling pathway"/>
    <property type="evidence" value="ECO:0000266"/>
    <property type="project" value="RGD"/>
</dbReference>
<dbReference type="GO" id="GO:0008625">
    <property type="term" value="P:extrinsic apoptotic signaling pathway via death domain receptors"/>
    <property type="evidence" value="ECO:0000315"/>
    <property type="project" value="RGD"/>
</dbReference>
<dbReference type="GO" id="GO:0006925">
    <property type="term" value="P:inflammatory cell apoptotic process"/>
    <property type="evidence" value="ECO:0000316"/>
    <property type="project" value="RGD"/>
</dbReference>
<dbReference type="GO" id="GO:0030644">
    <property type="term" value="P:intracellular chloride ion homeostasis"/>
    <property type="evidence" value="ECO:0000314"/>
    <property type="project" value="RGD"/>
</dbReference>
<dbReference type="GO" id="GO:0070266">
    <property type="term" value="P:necroptotic process"/>
    <property type="evidence" value="ECO:0000266"/>
    <property type="project" value="RGD"/>
</dbReference>
<dbReference type="GO" id="GO:0097527">
    <property type="term" value="P:necroptotic signaling pathway"/>
    <property type="evidence" value="ECO:0000266"/>
    <property type="project" value="RGD"/>
</dbReference>
<dbReference type="GO" id="GO:0016525">
    <property type="term" value="P:negative regulation of angiogenesis"/>
    <property type="evidence" value="ECO:0000266"/>
    <property type="project" value="RGD"/>
</dbReference>
<dbReference type="GO" id="GO:0000122">
    <property type="term" value="P:negative regulation of transcription by RNA polymerase II"/>
    <property type="evidence" value="ECO:0000250"/>
    <property type="project" value="UniProtKB"/>
</dbReference>
<dbReference type="GO" id="GO:0043065">
    <property type="term" value="P:positive regulation of apoptotic process"/>
    <property type="evidence" value="ECO:0000266"/>
    <property type="project" value="RGD"/>
</dbReference>
<dbReference type="GO" id="GO:0043123">
    <property type="term" value="P:positive regulation of canonical NF-kappaB signal transduction"/>
    <property type="evidence" value="ECO:0000266"/>
    <property type="project" value="RGD"/>
</dbReference>
<dbReference type="GO" id="GO:0008284">
    <property type="term" value="P:positive regulation of cell population proliferation"/>
    <property type="evidence" value="ECO:0000314"/>
    <property type="project" value="RGD"/>
</dbReference>
<dbReference type="GO" id="GO:2000353">
    <property type="term" value="P:positive regulation of endothelial cell apoptotic process"/>
    <property type="evidence" value="ECO:0000266"/>
    <property type="project" value="RGD"/>
</dbReference>
<dbReference type="GO" id="GO:0045742">
    <property type="term" value="P:positive regulation of epidermal growth factor receptor signaling pathway"/>
    <property type="evidence" value="ECO:0000315"/>
    <property type="project" value="RGD"/>
</dbReference>
<dbReference type="GO" id="GO:2001238">
    <property type="term" value="P:positive regulation of extrinsic apoptotic signaling pathway"/>
    <property type="evidence" value="ECO:0000318"/>
    <property type="project" value="GO_Central"/>
</dbReference>
<dbReference type="GO" id="GO:0043525">
    <property type="term" value="P:positive regulation of neuron apoptotic process"/>
    <property type="evidence" value="ECO:0000315"/>
    <property type="project" value="RGD"/>
</dbReference>
<dbReference type="GO" id="GO:1905782">
    <property type="term" value="P:positive regulation of phosphatidylserine exposure on apoptotic cell surface"/>
    <property type="evidence" value="ECO:0000266"/>
    <property type="project" value="RGD"/>
</dbReference>
<dbReference type="GO" id="GO:1903514">
    <property type="term" value="P:release of sequestered calcium ion into cytosol by endoplasmic reticulum"/>
    <property type="evidence" value="ECO:0000266"/>
    <property type="project" value="RGD"/>
</dbReference>
<dbReference type="GO" id="GO:0070848">
    <property type="term" value="P:response to growth factor"/>
    <property type="evidence" value="ECO:0000270"/>
    <property type="project" value="RGD"/>
</dbReference>
<dbReference type="GO" id="GO:0032496">
    <property type="term" value="P:response to lipopolysaccharide"/>
    <property type="evidence" value="ECO:0000270"/>
    <property type="project" value="RGD"/>
</dbReference>
<dbReference type="GO" id="GO:0046666">
    <property type="term" value="P:retinal cell programmed cell death"/>
    <property type="evidence" value="ECO:0000266"/>
    <property type="project" value="RGD"/>
</dbReference>
<dbReference type="GO" id="GO:0070231">
    <property type="term" value="P:T cell apoptotic process"/>
    <property type="evidence" value="ECO:0000266"/>
    <property type="project" value="RGD"/>
</dbReference>
<dbReference type="CDD" id="cd00184">
    <property type="entry name" value="TNF"/>
    <property type="match status" value="1"/>
</dbReference>
<dbReference type="FunFam" id="2.60.120.40:FF:000017">
    <property type="entry name" value="Tumor necrosis factor ligand superfamily member 6"/>
    <property type="match status" value="1"/>
</dbReference>
<dbReference type="Gene3D" id="2.60.120.40">
    <property type="match status" value="1"/>
</dbReference>
<dbReference type="InterPro" id="IPR028326">
    <property type="entry name" value="FASL"/>
</dbReference>
<dbReference type="InterPro" id="IPR021184">
    <property type="entry name" value="TNF_CS"/>
</dbReference>
<dbReference type="InterPro" id="IPR006052">
    <property type="entry name" value="TNF_dom"/>
</dbReference>
<dbReference type="InterPro" id="IPR008983">
    <property type="entry name" value="Tumour_necrosis_fac-like_dom"/>
</dbReference>
<dbReference type="PANTHER" id="PTHR11471">
    <property type="entry name" value="TUMOR NECROSIS FACTOR FAMILY MEMBER"/>
    <property type="match status" value="1"/>
</dbReference>
<dbReference type="PANTHER" id="PTHR11471:SF33">
    <property type="entry name" value="TUMOR NECROSIS FACTOR LIGAND SUPERFAMILY MEMBER 6"/>
    <property type="match status" value="1"/>
</dbReference>
<dbReference type="Pfam" id="PF00229">
    <property type="entry name" value="TNF"/>
    <property type="match status" value="1"/>
</dbReference>
<dbReference type="PRINTS" id="PR01681">
    <property type="entry name" value="FASLIGAND"/>
</dbReference>
<dbReference type="SMART" id="SM00207">
    <property type="entry name" value="TNF"/>
    <property type="match status" value="1"/>
</dbReference>
<dbReference type="SUPFAM" id="SSF49842">
    <property type="entry name" value="TNF-like"/>
    <property type="match status" value="1"/>
</dbReference>
<dbReference type="PROSITE" id="PS00251">
    <property type="entry name" value="THD_1"/>
    <property type="match status" value="1"/>
</dbReference>
<dbReference type="PROSITE" id="PS50049">
    <property type="entry name" value="THD_2"/>
    <property type="match status" value="1"/>
</dbReference>
<evidence type="ECO:0000250" key="1"/>
<evidence type="ECO:0000250" key="2">
    <source>
        <dbReference type="UniProtKB" id="P41047"/>
    </source>
</evidence>
<evidence type="ECO:0000250" key="3">
    <source>
        <dbReference type="UniProtKB" id="P48023"/>
    </source>
</evidence>
<evidence type="ECO:0000255" key="4"/>
<evidence type="ECO:0000255" key="5">
    <source>
        <dbReference type="PROSITE-ProRule" id="PRU01387"/>
    </source>
</evidence>
<evidence type="ECO:0000256" key="6">
    <source>
        <dbReference type="SAM" id="MobiDB-lite"/>
    </source>
</evidence>
<evidence type="ECO:0000269" key="7">
    <source>
    </source>
</evidence>
<evidence type="ECO:0000305" key="8"/>
<protein>
    <recommendedName>
        <fullName>Tumor necrosis factor ligand superfamily member 6</fullName>
    </recommendedName>
    <alternativeName>
        <fullName>CD95 ligand</fullName>
        <shortName>CD95-L</shortName>
    </alternativeName>
    <alternativeName>
        <fullName>Fas antigen ligand</fullName>
        <shortName>Fas ligand</shortName>
        <shortName>FasL</shortName>
    </alternativeName>
    <cdAntigenName>CD178</cdAntigenName>
    <component>
        <recommendedName>
            <fullName>Tumor necrosis factor ligand superfamily member 6, membrane form</fullName>
        </recommendedName>
    </component>
    <component>
        <recommendedName>
            <fullName>Tumor necrosis factor ligand superfamily member 6, soluble form</fullName>
        </recommendedName>
        <alternativeName>
            <fullName>Receptor-binding FasL ectodomain</fullName>
        </alternativeName>
        <alternativeName>
            <fullName>Soluble Fas ligand</fullName>
            <shortName>sFasL</shortName>
        </alternativeName>
    </component>
    <component>
        <recommendedName>
            <fullName>ADAM10-processed FasL form</fullName>
            <shortName>APL</shortName>
        </recommendedName>
    </component>
    <component>
        <recommendedName>
            <fullName>FasL intracellular domain</fullName>
            <shortName>FasL ICD</shortName>
        </recommendedName>
        <alternativeName>
            <fullName>SPPL2A-processed FasL form</fullName>
            <shortName>SPA</shortName>
        </alternativeName>
    </component>
</protein>
<name>TNFL6_RAT</name>
<organism>
    <name type="scientific">Rattus norvegicus</name>
    <name type="common">Rat</name>
    <dbReference type="NCBI Taxonomy" id="10116"/>
    <lineage>
        <taxon>Eukaryota</taxon>
        <taxon>Metazoa</taxon>
        <taxon>Chordata</taxon>
        <taxon>Craniata</taxon>
        <taxon>Vertebrata</taxon>
        <taxon>Euteleostomi</taxon>
        <taxon>Mammalia</taxon>
        <taxon>Eutheria</taxon>
        <taxon>Euarchontoglires</taxon>
        <taxon>Glires</taxon>
        <taxon>Rodentia</taxon>
        <taxon>Myomorpha</taxon>
        <taxon>Muroidea</taxon>
        <taxon>Muridae</taxon>
        <taxon>Murinae</taxon>
        <taxon>Rattus</taxon>
    </lineage>
</organism>
<keyword id="KW-0053">Apoptosis</keyword>
<keyword id="KW-1003">Cell membrane</keyword>
<keyword id="KW-0202">Cytokine</keyword>
<keyword id="KW-0968">Cytoplasmic vesicle</keyword>
<keyword id="KW-1015">Disulfide bond</keyword>
<keyword id="KW-0325">Glycoprotein</keyword>
<keyword id="KW-0458">Lysosome</keyword>
<keyword id="KW-0472">Membrane</keyword>
<keyword id="KW-0539">Nucleus</keyword>
<keyword id="KW-1185">Reference proteome</keyword>
<keyword id="KW-0678">Repressor</keyword>
<keyword id="KW-0964">Secreted</keyword>
<keyword id="KW-0735">Signal-anchor</keyword>
<keyword id="KW-0804">Transcription</keyword>
<keyword id="KW-0805">Transcription regulation</keyword>
<keyword id="KW-0812">Transmembrane</keyword>
<keyword id="KW-1133">Transmembrane helix</keyword>
<keyword id="KW-0832">Ubl conjugation</keyword>
<comment type="function">
    <text evidence="2 3 7">Cytokine that binds to TNFRSF6/FAS, a receptor that transduces the apoptotic signal into cells (PubMed:7505205). Involved in cytotoxic T-cell-mediated apoptosis, natural killer cell-mediated apoptosis and in T-cell development (PubMed:7505205). Initiates fratricidal/suicidal activation-induced cell death (AICD) in antigen-activated T-cells contributing to the termination of immune responses (By similarity). TNFRSF6/FAS-mediated apoptosis also has a role in the induction of peripheral tolerance (By similarity). Binds to TNFRSF6B/DcR3, a decoy receptor that blocks apoptosis (By similarity).</text>
</comment>
<comment type="function">
    <molecule>Tumor necrosis factor ligand superfamily member 6, soluble form</molecule>
    <text evidence="2">Induces FAS-mediated activation of NF-kappa-B, initiating non-apoptotic signaling pathways. Can induce apoptosis but does not appear to be essential for this process.</text>
</comment>
<comment type="function">
    <molecule>FasL intracellular domain</molecule>
    <text evidence="3">Cytoplasmic form induces gene transcription inhibition.</text>
</comment>
<comment type="subunit">
    <text evidence="3">Homotrimer. Interacts with ARHGAP9, BAIAP2L1, BTK, CACNB3, CACNB4, CRK, DLG2, DNMBP, DOCK4, EPS8L3, FGR, FYB1, FYN, HCK, ITK, ITSN2, KALRN, LYN, MACC1, MIA, MPP4, MYO15A, NCF1, NCK1, NCK2, NCKIPSD, OSTF1, PIK3R1, PSTPIP1, RIMBP3C, SAMSN1, SH3GL3, SH3PXD2B, SH3PXD2A, SH3RF2, SKAP2, SNX33, SNX9, SORBS3, SPTA1, SRC, SRGAP1, SRGAP2, SRGAP3, TEC, TJP3 and YES1.</text>
</comment>
<comment type="subcellular location">
    <subcellularLocation>
        <location evidence="7">Cell membrane</location>
        <topology evidence="4">Single-pass type II membrane protein</topology>
    </subcellularLocation>
    <subcellularLocation>
        <location evidence="3">Cytoplasmic vesicle lumen</location>
    </subcellularLocation>
    <subcellularLocation>
        <location evidence="3">Lysosome lumen</location>
    </subcellularLocation>
    <text evidence="3">Colocalizes with the SPPL2A protease at the cell membrane. Is internalized into multivesicular bodies of secretory lysosomes after phosphorylation by FGR and monoubiquitination.</text>
</comment>
<comment type="subcellular location">
    <molecule>Tumor necrosis factor ligand superfamily member 6, soluble form</molecule>
    <subcellularLocation>
        <location evidence="3">Secreted</location>
    </subcellularLocation>
    <text evidence="3">May be released into the extracellular fluid by cleavage from the cell surface.</text>
</comment>
<comment type="subcellular location">
    <molecule>FasL intracellular domain</molecule>
    <subcellularLocation>
        <location evidence="3">Nucleus</location>
    </subcellularLocation>
    <text evidence="3">The FasL ICD cytoplasmic form is translocated into the nucleus.</text>
</comment>
<comment type="tissue specificity">
    <text evidence="7">Expressed in activated splenocytes and thymocytes. Moderate or weak expression found in small intestines, kidney and lung.</text>
</comment>
<comment type="induction">
    <text evidence="7">By PMA/ionomycin and concanavalin/interleukin-2.</text>
</comment>
<comment type="PTM">
    <text evidence="3">The soluble form derives from the membrane form by proteolytic processing. The membrane-bound form undergoes two successive intramembrane proteolytic cleavages. The first one is processed by ADAM10 producing an N-terminal fragment, which lacks the receptor-binding extracellular domain. This ADAM10-processed FasL (FasL APL) remnant form is still membrane anchored and further processed by SPPL2A that liberates the FasL intracellular domain (FasL ICD). FasL shedding by ADAM10 is a prerequisite for subsequent intramembrane cleavage by SPPL2A in T-cells.</text>
</comment>
<comment type="PTM">
    <text evidence="3">Phosphorylated by FGR on tyrosine residues; this is required for ubiquitination and subsequent internalization.</text>
</comment>
<comment type="PTM">
    <text evidence="3">N-glycosylated.</text>
</comment>
<comment type="PTM">
    <text evidence="3">Monoubiquitinated.</text>
</comment>
<comment type="similarity">
    <text evidence="8">Belongs to the tumor necrosis factor family.</text>
</comment>
<accession>P36940</accession>
<reference key="1">
    <citation type="journal article" date="1993" name="Cell">
        <title>Molecular cloning and expression of the Fas ligand, a novel member of the tumor necrosis factor family.</title>
        <authorList>
            <person name="Suda T."/>
            <person name="Takahashi T."/>
            <person name="Golstein P."/>
            <person name="Nagata S."/>
        </authorList>
    </citation>
    <scope>NUCLEOTIDE SEQUENCE [MRNA]</scope>
    <scope>FUNCTION</scope>
    <scope>SUBCELLULAR LOCATION</scope>
    <scope>TISSUE SPECIFICITY</scope>
    <scope>INDUCTION</scope>
</reference>
<gene>
    <name type="primary">Faslg</name>
    <name type="synonym">Apt1Lg1</name>
    <name type="synonym">Cd95l</name>
    <name type="synonym">Fasl</name>
    <name type="synonym">Tnfsf6</name>
</gene>